<feature type="transit peptide" description="Mitochondrion" evidence="1">
    <location>
        <begin position="1"/>
        <end position="30"/>
    </location>
</feature>
<feature type="chain" id="PRO_0000021719" description="Mitochondrial genome maintenance protein MGM101">
    <location>
        <begin position="31"/>
        <end position="269"/>
    </location>
</feature>
<name>MG101_YEAST</name>
<accession>P32787</accession>
<accession>D6VWW3</accession>
<reference key="1">
    <citation type="journal article" date="1993" name="Nucleic Acids Res.">
        <title>MGM101, a nuclear gene involved in maintenance of the mitochondrial genome in Saccharomyces cerevisiae.</title>
        <authorList>
            <person name="Chen X.-J."/>
            <person name="Guan M.-X."/>
            <person name="Clark-Walker G.D."/>
        </authorList>
    </citation>
    <scope>NUCLEOTIDE SEQUENCE [GENOMIC DNA]</scope>
</reference>
<reference key="2">
    <citation type="journal article" date="1996" name="EMBO J.">
        <title>Complete nucleotide sequence of Saccharomyces cerevisiae chromosome X.</title>
        <authorList>
            <person name="Galibert F."/>
            <person name="Alexandraki D."/>
            <person name="Baur A."/>
            <person name="Boles E."/>
            <person name="Chalwatzis N."/>
            <person name="Chuat J.-C."/>
            <person name="Coster F."/>
            <person name="Cziepluch C."/>
            <person name="de Haan M."/>
            <person name="Domdey H."/>
            <person name="Durand P."/>
            <person name="Entian K.-D."/>
            <person name="Gatius M."/>
            <person name="Goffeau A."/>
            <person name="Grivell L.A."/>
            <person name="Hennemann A."/>
            <person name="Herbert C.J."/>
            <person name="Heumann K."/>
            <person name="Hilger F."/>
            <person name="Hollenberg C.P."/>
            <person name="Huang M.-E."/>
            <person name="Jacq C."/>
            <person name="Jauniaux J.-C."/>
            <person name="Katsoulou C."/>
            <person name="Kirchrath L."/>
            <person name="Kleine K."/>
            <person name="Kordes E."/>
            <person name="Koetter P."/>
            <person name="Liebl S."/>
            <person name="Louis E.J."/>
            <person name="Manus V."/>
            <person name="Mewes H.-W."/>
            <person name="Miosga T."/>
            <person name="Obermaier B."/>
            <person name="Perea J."/>
            <person name="Pohl T.M."/>
            <person name="Portetelle D."/>
            <person name="Pujol A."/>
            <person name="Purnelle B."/>
            <person name="Ramezani Rad M."/>
            <person name="Rasmussen S.W."/>
            <person name="Rose M."/>
            <person name="Rossau R."/>
            <person name="Schaaff-Gerstenschlaeger I."/>
            <person name="Smits P.H.M."/>
            <person name="Scarcez T."/>
            <person name="Soriano N."/>
            <person name="To Van D."/>
            <person name="Tzermia M."/>
            <person name="Van Broekhoven A."/>
            <person name="Vandenbol M."/>
            <person name="Wedler H."/>
            <person name="von Wettstein D."/>
            <person name="Wambutt R."/>
            <person name="Zagulski M."/>
            <person name="Zollner A."/>
            <person name="Karpfinger-Hartl L."/>
        </authorList>
    </citation>
    <scope>NUCLEOTIDE SEQUENCE [LARGE SCALE GENOMIC DNA]</scope>
    <source>
        <strain>ATCC 204508 / S288c</strain>
    </source>
</reference>
<reference key="3">
    <citation type="journal article" date="2014" name="G3 (Bethesda)">
        <title>The reference genome sequence of Saccharomyces cerevisiae: Then and now.</title>
        <authorList>
            <person name="Engel S.R."/>
            <person name="Dietrich F.S."/>
            <person name="Fisk D.G."/>
            <person name="Binkley G."/>
            <person name="Balakrishnan R."/>
            <person name="Costanzo M.C."/>
            <person name="Dwight S.S."/>
            <person name="Hitz B.C."/>
            <person name="Karra K."/>
            <person name="Nash R.S."/>
            <person name="Weng S."/>
            <person name="Wong E.D."/>
            <person name="Lloyd P."/>
            <person name="Skrzypek M.S."/>
            <person name="Miyasato S.R."/>
            <person name="Simison M."/>
            <person name="Cherry J.M."/>
        </authorList>
    </citation>
    <scope>GENOME REANNOTATION</scope>
    <source>
        <strain>ATCC 204508 / S288c</strain>
    </source>
</reference>
<reference key="4">
    <citation type="journal article" date="1999" name="J. Cell Biol.">
        <title>Mgm101p is a novel component of the mitochondrial nucleoid that binds DNA and is required for the repair of oxidatively damaged mitochondrial DNA.</title>
        <authorList>
            <person name="Meeusen S."/>
            <person name="Tieu Q."/>
            <person name="Wong E."/>
            <person name="Weiss E."/>
            <person name="Schieltz D."/>
            <person name="Yates J.R. III"/>
            <person name="Nunnari J."/>
        </authorList>
    </citation>
    <scope>FUNCTION</scope>
    <scope>SUBCELLULAR LOCATION</scope>
    <scope>IDENTIFICATION BY MASS SPECTROMETRY</scope>
</reference>
<reference key="5">
    <citation type="journal article" date="2003" name="Proc. Natl. Acad. Sci. U.S.A.">
        <title>The proteome of Saccharomyces cerevisiae mitochondria.</title>
        <authorList>
            <person name="Sickmann A."/>
            <person name="Reinders J."/>
            <person name="Wagner Y."/>
            <person name="Joppich C."/>
            <person name="Zahedi R.P."/>
            <person name="Meyer H.E."/>
            <person name="Schoenfisch B."/>
            <person name="Perschil I."/>
            <person name="Chacinska A."/>
            <person name="Guiard B."/>
            <person name="Rehling P."/>
            <person name="Pfanner N."/>
            <person name="Meisinger C."/>
        </authorList>
    </citation>
    <scope>SUBCELLULAR LOCATION [LARGE SCALE ANALYSIS]</scope>
    <source>
        <strain>ATCC 76625 / YPH499</strain>
    </source>
</reference>
<reference key="6">
    <citation type="journal article" date="2012" name="Proc. Natl. Acad. Sci. U.S.A.">
        <title>N-terminal acetylome analyses and functional insights of the N-terminal acetyltransferase NatB.</title>
        <authorList>
            <person name="Van Damme P."/>
            <person name="Lasa M."/>
            <person name="Polevoda B."/>
            <person name="Gazquez C."/>
            <person name="Elosegui-Artola A."/>
            <person name="Kim D.S."/>
            <person name="De Juan-Pardo E."/>
            <person name="Demeyer K."/>
            <person name="Hole K."/>
            <person name="Larrea E."/>
            <person name="Timmerman E."/>
            <person name="Prieto J."/>
            <person name="Arnesen T."/>
            <person name="Sherman F."/>
            <person name="Gevaert K."/>
            <person name="Aldabe R."/>
        </authorList>
    </citation>
    <scope>IDENTIFICATION BY MASS SPECTROMETRY [LARGE SCALE ANALYSIS]</scope>
</reference>
<proteinExistence type="evidence at protein level"/>
<organism>
    <name type="scientific">Saccharomyces cerevisiae (strain ATCC 204508 / S288c)</name>
    <name type="common">Baker's yeast</name>
    <dbReference type="NCBI Taxonomy" id="559292"/>
    <lineage>
        <taxon>Eukaryota</taxon>
        <taxon>Fungi</taxon>
        <taxon>Dikarya</taxon>
        <taxon>Ascomycota</taxon>
        <taxon>Saccharomycotina</taxon>
        <taxon>Saccharomycetes</taxon>
        <taxon>Saccharomycetales</taxon>
        <taxon>Saccharomycetaceae</taxon>
        <taxon>Saccharomyces</taxon>
    </lineage>
</organism>
<keyword id="KW-0227">DNA damage</keyword>
<keyword id="KW-0234">DNA repair</keyword>
<keyword id="KW-0238">DNA-binding</keyword>
<keyword id="KW-0496">Mitochondrion</keyword>
<keyword id="KW-1135">Mitochondrion nucleoid</keyword>
<keyword id="KW-1185">Reference proteome</keyword>
<keyword id="KW-0809">Transit peptide</keyword>
<comment type="function">
    <text evidence="2">Performs an essential function in the repair of oxidatively damaged mtDNA that is required for the maintenance of the mitochondrial genome. Binds to DNA.</text>
</comment>
<comment type="subcellular location">
    <subcellularLocation>
        <location evidence="2 3">Mitochondrion matrix</location>
        <location evidence="2 3">Mitochondrion nucleoid</location>
    </subcellularLocation>
</comment>
<comment type="similarity">
    <text evidence="4">Belongs to the MGM101 family.</text>
</comment>
<protein>
    <recommendedName>
        <fullName>Mitochondrial genome maintenance protein MGM101</fullName>
    </recommendedName>
</protein>
<evidence type="ECO:0000255" key="1"/>
<evidence type="ECO:0000269" key="2">
    <source>
    </source>
</evidence>
<evidence type="ECO:0000269" key="3">
    <source>
    </source>
</evidence>
<evidence type="ECO:0000305" key="4"/>
<dbReference type="EMBL" id="X68482">
    <property type="protein sequence ID" value="CAA48502.1"/>
    <property type="molecule type" value="Genomic_DNA"/>
</dbReference>
<dbReference type="EMBL" id="Z49644">
    <property type="protein sequence ID" value="CAA89677.1"/>
    <property type="molecule type" value="Genomic_DNA"/>
</dbReference>
<dbReference type="EMBL" id="BK006943">
    <property type="protein sequence ID" value="DAA08929.1"/>
    <property type="molecule type" value="Genomic_DNA"/>
</dbReference>
<dbReference type="PIR" id="S34849">
    <property type="entry name" value="S34849"/>
</dbReference>
<dbReference type="RefSeq" id="NP_012678.1">
    <property type="nucleotide sequence ID" value="NM_001181802.1"/>
</dbReference>
<dbReference type="BioGRID" id="33900">
    <property type="interactions" value="306"/>
</dbReference>
<dbReference type="DIP" id="DIP-5044N"/>
<dbReference type="FunCoup" id="P32787">
    <property type="interactions" value="347"/>
</dbReference>
<dbReference type="IntAct" id="P32787">
    <property type="interactions" value="32"/>
</dbReference>
<dbReference type="MINT" id="P32787"/>
<dbReference type="STRING" id="4932.YJR144W"/>
<dbReference type="iPTMnet" id="P32787"/>
<dbReference type="PaxDb" id="4932-YJR144W"/>
<dbReference type="PeptideAtlas" id="P32787"/>
<dbReference type="EnsemblFungi" id="YJR144W_mRNA">
    <property type="protein sequence ID" value="YJR144W"/>
    <property type="gene ID" value="YJR144W"/>
</dbReference>
<dbReference type="GeneID" id="853609"/>
<dbReference type="KEGG" id="sce:YJR144W"/>
<dbReference type="AGR" id="SGD:S000003905"/>
<dbReference type="SGD" id="S000003905">
    <property type="gene designation" value="MGM101"/>
</dbReference>
<dbReference type="VEuPathDB" id="FungiDB:YJR144W"/>
<dbReference type="eggNOG" id="ENOG502RXU4">
    <property type="taxonomic scope" value="Eukaryota"/>
</dbReference>
<dbReference type="HOGENOM" id="CLU_028692_1_0_1"/>
<dbReference type="InParanoid" id="P32787"/>
<dbReference type="OMA" id="INWETSW"/>
<dbReference type="OrthoDB" id="17164at2759"/>
<dbReference type="BioCyc" id="YEAST:G3O-31758-MONOMER"/>
<dbReference type="BioGRID-ORCS" id="853609">
    <property type="hits" value="10 hits in 10 CRISPR screens"/>
</dbReference>
<dbReference type="PRO" id="PR:P32787"/>
<dbReference type="Proteomes" id="UP000002311">
    <property type="component" value="Chromosome X"/>
</dbReference>
<dbReference type="RNAct" id="P32787">
    <property type="molecule type" value="protein"/>
</dbReference>
<dbReference type="GO" id="GO:0000262">
    <property type="term" value="C:mitochondrial chromosome"/>
    <property type="evidence" value="ECO:0007669"/>
    <property type="project" value="InterPro"/>
</dbReference>
<dbReference type="GO" id="GO:0042645">
    <property type="term" value="C:mitochondrial nucleoid"/>
    <property type="evidence" value="ECO:0000314"/>
    <property type="project" value="SGD"/>
</dbReference>
<dbReference type="GO" id="GO:0005739">
    <property type="term" value="C:mitochondrion"/>
    <property type="evidence" value="ECO:0007005"/>
    <property type="project" value="SGD"/>
</dbReference>
<dbReference type="GO" id="GO:0003677">
    <property type="term" value="F:DNA binding"/>
    <property type="evidence" value="ECO:0000318"/>
    <property type="project" value="GO_Central"/>
</dbReference>
<dbReference type="GO" id="GO:0003697">
    <property type="term" value="F:single-stranded DNA binding"/>
    <property type="evidence" value="ECO:0000314"/>
    <property type="project" value="SGD"/>
</dbReference>
<dbReference type="GO" id="GO:0006281">
    <property type="term" value="P:DNA repair"/>
    <property type="evidence" value="ECO:0000315"/>
    <property type="project" value="SGD"/>
</dbReference>
<dbReference type="GO" id="GO:0036297">
    <property type="term" value="P:interstrand cross-link repair"/>
    <property type="evidence" value="ECO:0000316"/>
    <property type="project" value="SGD"/>
</dbReference>
<dbReference type="GO" id="GO:0000002">
    <property type="term" value="P:mitochondrial genome maintenance"/>
    <property type="evidence" value="ECO:0000315"/>
    <property type="project" value="SGD"/>
</dbReference>
<dbReference type="GO" id="GO:0000725">
    <property type="term" value="P:recombinational repair"/>
    <property type="evidence" value="ECO:0000315"/>
    <property type="project" value="SGD"/>
</dbReference>
<dbReference type="InterPro" id="IPR009446">
    <property type="entry name" value="Mgm101"/>
</dbReference>
<dbReference type="PANTHER" id="PTHR31404">
    <property type="entry name" value="MITOCHONDRIAL GENOME MAINTENANCE PROTEIN MGM101"/>
    <property type="match status" value="1"/>
</dbReference>
<dbReference type="PANTHER" id="PTHR31404:SF0">
    <property type="entry name" value="MITOCHONDRIAL GENOME MAINTENANCE PROTEIN MGM101"/>
    <property type="match status" value="1"/>
</dbReference>
<dbReference type="Pfam" id="PF06420">
    <property type="entry name" value="Mgm101p"/>
    <property type="match status" value="1"/>
</dbReference>
<sequence length="269" mass="30091">MKSIFKVRGCVSHAAQFCQKRTVVSTGTSNTATAGAVRKSFNSTETKPVFATKSEAGNGSHMKEYSSGINSKLGGTPLETRSTADDSLNNSYKQVKGDIDWYTSWYGLGMKPFEAKVQKDLIEPLDPKDIEIKPDGLIYLPEIKYRRILNKAFGAGGWGLVPRSQTIVTSKLVTREYGLICHGQLISVARGEQDYFNEAGIPTATEGCKSNALMRCCKDLGVGSELWDPVFIKKFKVDHCTEKFVEHVTTKRKKKIWLRKDRQVEYPYK</sequence>
<gene>
    <name type="primary">MGM101</name>
    <name type="synonym">MGM9</name>
    <name type="ordered locus">YJR144W</name>
    <name type="ORF">J2181</name>
</gene>